<reference key="1">
    <citation type="journal article" date="2015" name="Proc. Natl. Acad. Sci. U.S.A.">
        <title>Trichodesmium genome maintains abundant, widespread noncoding DNA in situ, despite oligotrophic lifestyle.</title>
        <authorList>
            <person name="Walworth N."/>
            <person name="Pfreundt U."/>
            <person name="Nelson W.C."/>
            <person name="Mincer T."/>
            <person name="Heidelberg J.F."/>
            <person name="Fu F."/>
            <person name="Waterbury J.B."/>
            <person name="Glavina del Rio T."/>
            <person name="Goodwin L."/>
            <person name="Kyrpides N.C."/>
            <person name="Land M.L."/>
            <person name="Woyke T."/>
            <person name="Hutchins D.A."/>
            <person name="Hess W.R."/>
            <person name="Webb E.A."/>
        </authorList>
    </citation>
    <scope>NUCLEOTIDE SEQUENCE [LARGE SCALE GENOMIC DNA]</scope>
    <source>
        <strain>IMS101</strain>
    </source>
</reference>
<gene>
    <name evidence="1" type="primary">trpD</name>
    <name type="ordered locus">Tery_2308</name>
</gene>
<comment type="function">
    <text evidence="1">Catalyzes the transfer of the phosphoribosyl group of 5-phosphorylribose-1-pyrophosphate (PRPP) to anthranilate to yield N-(5'-phosphoribosyl)-anthranilate (PRA).</text>
</comment>
<comment type="catalytic activity">
    <reaction evidence="1">
        <text>N-(5-phospho-beta-D-ribosyl)anthranilate + diphosphate = 5-phospho-alpha-D-ribose 1-diphosphate + anthranilate</text>
        <dbReference type="Rhea" id="RHEA:11768"/>
        <dbReference type="ChEBI" id="CHEBI:16567"/>
        <dbReference type="ChEBI" id="CHEBI:18277"/>
        <dbReference type="ChEBI" id="CHEBI:33019"/>
        <dbReference type="ChEBI" id="CHEBI:58017"/>
        <dbReference type="EC" id="2.4.2.18"/>
    </reaction>
</comment>
<comment type="cofactor">
    <cofactor evidence="1">
        <name>Mg(2+)</name>
        <dbReference type="ChEBI" id="CHEBI:18420"/>
    </cofactor>
    <text evidence="1">Binds 2 magnesium ions per monomer.</text>
</comment>
<comment type="pathway">
    <text evidence="1">Amino-acid biosynthesis; L-tryptophan biosynthesis; L-tryptophan from chorismate: step 2/5.</text>
</comment>
<comment type="subunit">
    <text evidence="1">Homodimer.</text>
</comment>
<comment type="similarity">
    <text evidence="1">Belongs to the anthranilate phosphoribosyltransferase family.</text>
</comment>
<name>TRPD_TRIEI</name>
<evidence type="ECO:0000255" key="1">
    <source>
        <dbReference type="HAMAP-Rule" id="MF_00211"/>
    </source>
</evidence>
<sequence length="356" mass="37481">MNNSSINEWPSLLQQLLDGQSLSSSQASNLMQGWLQEEIPPVLSGAILAALQAKGVSAQELAGMAKVLQSLSLTKEYHNNNIPITNFQYPIIDTCGTGGDGASTFNISTAVAFVLAAAGVPVAKHGNRSASGKVGSADVLEALGIRLNAPTEKVISALSEVGITFLFAPGWHPAMKCVVPLRRTLKVRTVFNLLGPLVNPLRPQAQIIGVYNSTLVKTVAQALGILGVEYAIALHGREKLDEAGLGDITDIAILSHGEVKATSINPQYLGLNYAPISTLQGGDVEQNAEILKNVLQGKGTSQQTDVVALNSSLALQVAGVVPLEAHQEGIGKAKDILQSGAAWLKLEQLVQFLSIF</sequence>
<feature type="chain" id="PRO_0000325476" description="Anthranilate phosphoribosyltransferase">
    <location>
        <begin position="1"/>
        <end position="356"/>
    </location>
</feature>
<feature type="binding site" evidence="1">
    <location>
        <position position="96"/>
    </location>
    <ligand>
        <name>5-phospho-alpha-D-ribose 1-diphosphate</name>
        <dbReference type="ChEBI" id="CHEBI:58017"/>
    </ligand>
</feature>
<feature type="binding site" evidence="1">
    <location>
        <position position="96"/>
    </location>
    <ligand>
        <name>anthranilate</name>
        <dbReference type="ChEBI" id="CHEBI:16567"/>
        <label>1</label>
    </ligand>
</feature>
<feature type="binding site" evidence="1">
    <location>
        <begin position="99"/>
        <end position="100"/>
    </location>
    <ligand>
        <name>5-phospho-alpha-D-ribose 1-diphosphate</name>
        <dbReference type="ChEBI" id="CHEBI:58017"/>
    </ligand>
</feature>
<feature type="binding site" evidence="1">
    <location>
        <position position="104"/>
    </location>
    <ligand>
        <name>5-phospho-alpha-D-ribose 1-diphosphate</name>
        <dbReference type="ChEBI" id="CHEBI:58017"/>
    </ligand>
</feature>
<feature type="binding site" evidence="1">
    <location>
        <begin position="106"/>
        <end position="109"/>
    </location>
    <ligand>
        <name>5-phospho-alpha-D-ribose 1-diphosphate</name>
        <dbReference type="ChEBI" id="CHEBI:58017"/>
    </ligand>
</feature>
<feature type="binding site" evidence="1">
    <location>
        <position position="108"/>
    </location>
    <ligand>
        <name>Mg(2+)</name>
        <dbReference type="ChEBI" id="CHEBI:18420"/>
        <label>1</label>
    </ligand>
</feature>
<feature type="binding site" evidence="1">
    <location>
        <begin position="124"/>
        <end position="132"/>
    </location>
    <ligand>
        <name>5-phospho-alpha-D-ribose 1-diphosphate</name>
        <dbReference type="ChEBI" id="CHEBI:58017"/>
    </ligand>
</feature>
<feature type="binding site" evidence="1">
    <location>
        <position position="127"/>
    </location>
    <ligand>
        <name>anthranilate</name>
        <dbReference type="ChEBI" id="CHEBI:16567"/>
        <label>1</label>
    </ligand>
</feature>
<feature type="binding site" evidence="1">
    <location>
        <position position="136"/>
    </location>
    <ligand>
        <name>5-phospho-alpha-D-ribose 1-diphosphate</name>
        <dbReference type="ChEBI" id="CHEBI:58017"/>
    </ligand>
</feature>
<feature type="binding site" evidence="1">
    <location>
        <position position="182"/>
    </location>
    <ligand>
        <name>anthranilate</name>
        <dbReference type="ChEBI" id="CHEBI:16567"/>
        <label>2</label>
    </ligand>
</feature>
<feature type="binding site" evidence="1">
    <location>
        <position position="241"/>
    </location>
    <ligand>
        <name>Mg(2+)</name>
        <dbReference type="ChEBI" id="CHEBI:18420"/>
        <label>2</label>
    </ligand>
</feature>
<feature type="binding site" evidence="1">
    <location>
        <position position="242"/>
    </location>
    <ligand>
        <name>Mg(2+)</name>
        <dbReference type="ChEBI" id="CHEBI:18420"/>
        <label>1</label>
    </ligand>
</feature>
<feature type="binding site" evidence="1">
    <location>
        <position position="242"/>
    </location>
    <ligand>
        <name>Mg(2+)</name>
        <dbReference type="ChEBI" id="CHEBI:18420"/>
        <label>2</label>
    </ligand>
</feature>
<protein>
    <recommendedName>
        <fullName evidence="1">Anthranilate phosphoribosyltransferase</fullName>
        <ecNumber evidence="1">2.4.2.18</ecNumber>
    </recommendedName>
</protein>
<dbReference type="EC" id="2.4.2.18" evidence="1"/>
<dbReference type="EMBL" id="CP000393">
    <property type="protein sequence ID" value="ABG51532.1"/>
    <property type="molecule type" value="Genomic_DNA"/>
</dbReference>
<dbReference type="RefSeq" id="WP_011611899.1">
    <property type="nucleotide sequence ID" value="NC_008312.1"/>
</dbReference>
<dbReference type="SMR" id="Q112P2"/>
<dbReference type="STRING" id="203124.Tery_2308"/>
<dbReference type="KEGG" id="ter:Tery_2308"/>
<dbReference type="eggNOG" id="COG0547">
    <property type="taxonomic scope" value="Bacteria"/>
</dbReference>
<dbReference type="HOGENOM" id="CLU_034315_2_1_3"/>
<dbReference type="OrthoDB" id="9806430at2"/>
<dbReference type="UniPathway" id="UPA00035">
    <property type="reaction ID" value="UER00041"/>
</dbReference>
<dbReference type="GO" id="GO:0005829">
    <property type="term" value="C:cytosol"/>
    <property type="evidence" value="ECO:0007669"/>
    <property type="project" value="TreeGrafter"/>
</dbReference>
<dbReference type="GO" id="GO:0004048">
    <property type="term" value="F:anthranilate phosphoribosyltransferase activity"/>
    <property type="evidence" value="ECO:0007669"/>
    <property type="project" value="UniProtKB-UniRule"/>
</dbReference>
<dbReference type="GO" id="GO:0000287">
    <property type="term" value="F:magnesium ion binding"/>
    <property type="evidence" value="ECO:0007669"/>
    <property type="project" value="UniProtKB-UniRule"/>
</dbReference>
<dbReference type="GO" id="GO:0000162">
    <property type="term" value="P:L-tryptophan biosynthetic process"/>
    <property type="evidence" value="ECO:0007669"/>
    <property type="project" value="UniProtKB-UniRule"/>
</dbReference>
<dbReference type="FunFam" id="3.40.1030.10:FF:000002">
    <property type="entry name" value="Anthranilate phosphoribosyltransferase"/>
    <property type="match status" value="1"/>
</dbReference>
<dbReference type="Gene3D" id="3.40.1030.10">
    <property type="entry name" value="Nucleoside phosphorylase/phosphoribosyltransferase catalytic domain"/>
    <property type="match status" value="1"/>
</dbReference>
<dbReference type="Gene3D" id="1.20.970.10">
    <property type="entry name" value="Transferase, Pyrimidine Nucleoside Phosphorylase, Chain C"/>
    <property type="match status" value="1"/>
</dbReference>
<dbReference type="HAMAP" id="MF_00211">
    <property type="entry name" value="TrpD"/>
    <property type="match status" value="1"/>
</dbReference>
<dbReference type="InterPro" id="IPR005940">
    <property type="entry name" value="Anthranilate_Pribosyl_Tfrase"/>
</dbReference>
<dbReference type="InterPro" id="IPR000312">
    <property type="entry name" value="Glycosyl_Trfase_fam3"/>
</dbReference>
<dbReference type="InterPro" id="IPR017459">
    <property type="entry name" value="Glycosyl_Trfase_fam3_N_dom"/>
</dbReference>
<dbReference type="InterPro" id="IPR036320">
    <property type="entry name" value="Glycosyl_Trfase_fam3_N_dom_sf"/>
</dbReference>
<dbReference type="InterPro" id="IPR035902">
    <property type="entry name" value="Nuc_phospho_transferase"/>
</dbReference>
<dbReference type="NCBIfam" id="TIGR01245">
    <property type="entry name" value="trpD"/>
    <property type="match status" value="1"/>
</dbReference>
<dbReference type="PANTHER" id="PTHR43285">
    <property type="entry name" value="ANTHRANILATE PHOSPHORIBOSYLTRANSFERASE"/>
    <property type="match status" value="1"/>
</dbReference>
<dbReference type="PANTHER" id="PTHR43285:SF2">
    <property type="entry name" value="ANTHRANILATE PHOSPHORIBOSYLTRANSFERASE"/>
    <property type="match status" value="1"/>
</dbReference>
<dbReference type="Pfam" id="PF02885">
    <property type="entry name" value="Glycos_trans_3N"/>
    <property type="match status" value="1"/>
</dbReference>
<dbReference type="Pfam" id="PF00591">
    <property type="entry name" value="Glycos_transf_3"/>
    <property type="match status" value="1"/>
</dbReference>
<dbReference type="SUPFAM" id="SSF52418">
    <property type="entry name" value="Nucleoside phosphorylase/phosphoribosyltransferase catalytic domain"/>
    <property type="match status" value="1"/>
</dbReference>
<dbReference type="SUPFAM" id="SSF47648">
    <property type="entry name" value="Nucleoside phosphorylase/phosphoribosyltransferase N-terminal domain"/>
    <property type="match status" value="1"/>
</dbReference>
<organism>
    <name type="scientific">Trichodesmium erythraeum (strain IMS101)</name>
    <dbReference type="NCBI Taxonomy" id="203124"/>
    <lineage>
        <taxon>Bacteria</taxon>
        <taxon>Bacillati</taxon>
        <taxon>Cyanobacteriota</taxon>
        <taxon>Cyanophyceae</taxon>
        <taxon>Oscillatoriophycideae</taxon>
        <taxon>Oscillatoriales</taxon>
        <taxon>Microcoleaceae</taxon>
        <taxon>Trichodesmium</taxon>
    </lineage>
</organism>
<accession>Q112P2</accession>
<proteinExistence type="inferred from homology"/>
<keyword id="KW-0028">Amino-acid biosynthesis</keyword>
<keyword id="KW-0057">Aromatic amino acid biosynthesis</keyword>
<keyword id="KW-0328">Glycosyltransferase</keyword>
<keyword id="KW-0460">Magnesium</keyword>
<keyword id="KW-0479">Metal-binding</keyword>
<keyword id="KW-0808">Transferase</keyword>
<keyword id="KW-0822">Tryptophan biosynthesis</keyword>